<accession>F4NYQ2</accession>
<keyword id="KW-0479">Metal-binding</keyword>
<keyword id="KW-0539">Nucleus</keyword>
<keyword id="KW-1185">Reference proteome</keyword>
<keyword id="KW-0687">Ribonucleoprotein</keyword>
<keyword id="KW-0694">RNA-binding</keyword>
<keyword id="KW-0862">Zinc</keyword>
<keyword id="KW-0863">Zinc-finger</keyword>
<comment type="function">
    <text evidence="1">Component of the spliceosomal U1 snRNP, which is essential for recognition of the pre-mRNA 5' splice-site and the subsequent assembly of the spliceosome. U1-C is directly involved in initial 5' splice-site recognition for both constitutive and regulated alternative splicing. The interaction with the 5' splice-site seems to precede base-pairing between the pre-mRNA and the U1 snRNA. Stimulates commitment or early (E) complex formation by stabilizing the base pairing of the 5' end of the U1 snRNA and the 5' splice-site region.</text>
</comment>
<comment type="subunit">
    <text evidence="1">U1 snRNP is composed of the 7 core Sm proteins B/B', D1, D2, D3, E, F and G that assemble in a heptameric protein ring on the Sm site of the small nuclear RNA to form the core snRNP, and at least 3 U1 snRNP-specific proteins U1-70K, U1-A and U1-C. U1-C interacts with U1 snRNA and the 5' splice-site region of the pre-mRNA.</text>
</comment>
<comment type="subcellular location">
    <subcellularLocation>
        <location evidence="1">Nucleus</location>
    </subcellularLocation>
</comment>
<comment type="similarity">
    <text evidence="1">Belongs to the U1 small nuclear ribonucleoprotein C family.</text>
</comment>
<dbReference type="EMBL" id="GL882881">
    <property type="protein sequence ID" value="EGF82067.1"/>
    <property type="molecule type" value="Genomic_DNA"/>
</dbReference>
<dbReference type="RefSeq" id="XP_006677259.1">
    <property type="nucleotide sequence ID" value="XM_006677196.1"/>
</dbReference>
<dbReference type="SMR" id="F4NYQ2"/>
<dbReference type="STRING" id="684364.F4NYQ2"/>
<dbReference type="GeneID" id="18238189"/>
<dbReference type="HOGENOM" id="CLU_1214537_0_0_1"/>
<dbReference type="InParanoid" id="F4NYQ2"/>
<dbReference type="OMA" id="QMRPPLM"/>
<dbReference type="OrthoDB" id="76567at2759"/>
<dbReference type="Proteomes" id="UP000007241">
    <property type="component" value="Unassembled WGS sequence"/>
</dbReference>
<dbReference type="GO" id="GO:0000243">
    <property type="term" value="C:commitment complex"/>
    <property type="evidence" value="ECO:0007669"/>
    <property type="project" value="UniProtKB-UniRule"/>
</dbReference>
<dbReference type="GO" id="GO:0005685">
    <property type="term" value="C:U1 snRNP"/>
    <property type="evidence" value="ECO:0000318"/>
    <property type="project" value="GO_Central"/>
</dbReference>
<dbReference type="GO" id="GO:0071004">
    <property type="term" value="C:U2-type prespliceosome"/>
    <property type="evidence" value="ECO:0007669"/>
    <property type="project" value="UniProtKB-UniRule"/>
</dbReference>
<dbReference type="GO" id="GO:0003729">
    <property type="term" value="F:mRNA binding"/>
    <property type="evidence" value="ECO:0007669"/>
    <property type="project" value="UniProtKB-UniRule"/>
</dbReference>
<dbReference type="GO" id="GO:0030627">
    <property type="term" value="F:pre-mRNA 5'-splice site binding"/>
    <property type="evidence" value="ECO:0000318"/>
    <property type="project" value="GO_Central"/>
</dbReference>
<dbReference type="GO" id="GO:0030619">
    <property type="term" value="F:U1 snRNA binding"/>
    <property type="evidence" value="ECO:0007669"/>
    <property type="project" value="UniProtKB-UniRule"/>
</dbReference>
<dbReference type="GO" id="GO:0008270">
    <property type="term" value="F:zinc ion binding"/>
    <property type="evidence" value="ECO:0007669"/>
    <property type="project" value="UniProtKB-UniRule"/>
</dbReference>
<dbReference type="GO" id="GO:0000395">
    <property type="term" value="P:mRNA 5'-splice site recognition"/>
    <property type="evidence" value="ECO:0000318"/>
    <property type="project" value="GO_Central"/>
</dbReference>
<dbReference type="GO" id="GO:0000387">
    <property type="term" value="P:spliceosomal snRNP assembly"/>
    <property type="evidence" value="ECO:0007669"/>
    <property type="project" value="UniProtKB-UniRule"/>
</dbReference>
<dbReference type="Gene3D" id="3.30.160.60">
    <property type="entry name" value="Classic Zinc Finger"/>
    <property type="match status" value="1"/>
</dbReference>
<dbReference type="HAMAP" id="MF_03153">
    <property type="entry name" value="U1_C"/>
    <property type="match status" value="1"/>
</dbReference>
<dbReference type="InterPro" id="IPR000690">
    <property type="entry name" value="Matrin/U1-C_Znf_C2H2"/>
</dbReference>
<dbReference type="InterPro" id="IPR013085">
    <property type="entry name" value="U1-CZ_Znf_C2H2"/>
</dbReference>
<dbReference type="InterPro" id="IPR017340">
    <property type="entry name" value="U1_snRNP-C"/>
</dbReference>
<dbReference type="InterPro" id="IPR036236">
    <property type="entry name" value="Znf_C2H2_sf"/>
</dbReference>
<dbReference type="PANTHER" id="PTHR31148">
    <property type="entry name" value="U1 SMALL NUCLEAR RIBONUCLEOPROTEIN C"/>
    <property type="match status" value="1"/>
</dbReference>
<dbReference type="PANTHER" id="PTHR31148:SF1">
    <property type="entry name" value="U1 SMALL NUCLEAR RIBONUCLEOPROTEIN C"/>
    <property type="match status" value="1"/>
</dbReference>
<dbReference type="Pfam" id="PF06220">
    <property type="entry name" value="zf-U1"/>
    <property type="match status" value="1"/>
</dbReference>
<dbReference type="SUPFAM" id="SSF57667">
    <property type="entry name" value="beta-beta-alpha zinc fingers"/>
    <property type="match status" value="1"/>
</dbReference>
<dbReference type="PROSITE" id="PS50171">
    <property type="entry name" value="ZF_MATRIN"/>
    <property type="match status" value="1"/>
</dbReference>
<feature type="chain" id="PRO_0000414283" description="U1 small nuclear ribonucleoprotein C">
    <location>
        <begin position="1"/>
        <end position="228"/>
    </location>
</feature>
<feature type="zinc finger region" description="Matrin-type; degenerate" evidence="1">
    <location>
        <begin position="11"/>
        <end position="43"/>
    </location>
</feature>
<feature type="region of interest" description="Disordered" evidence="2">
    <location>
        <begin position="83"/>
        <end position="127"/>
    </location>
</feature>
<feature type="compositionally biased region" description="Pro residues" evidence="2">
    <location>
        <begin position="105"/>
        <end position="127"/>
    </location>
</feature>
<sequence length="228" mass="24695">MTMDGVFPLTATVDYCDIFLTHDSASVRKAHNTGWKHKMQVEHYYNAEVDPAKIQSVIDNVTKAYIDAGLPGFPELIAVGVNGQRGQPVGGPPRPPQPFHNGGRPGPPGRPPMGMFPPQRPMMPPPHMRPGLSQMPPGMRPPGPPPHGFMNGSMPPPLGTPVMENGPVAGQQSQAPVAPRIHPDRLRLAGNSIKSKLVIESIYCFYPFGCLDSQIATHTFLYHCANDS</sequence>
<protein>
    <recommendedName>
        <fullName evidence="1">U1 small nuclear ribonucleoprotein C</fullName>
        <shortName evidence="1">U1 snRNP C</shortName>
        <shortName evidence="1">U1-C</shortName>
        <shortName evidence="1">U1C</shortName>
    </recommendedName>
</protein>
<evidence type="ECO:0000255" key="1">
    <source>
        <dbReference type="HAMAP-Rule" id="MF_03153"/>
    </source>
</evidence>
<evidence type="ECO:0000256" key="2">
    <source>
        <dbReference type="SAM" id="MobiDB-lite"/>
    </source>
</evidence>
<name>RU1C_BATDJ</name>
<organism>
    <name type="scientific">Batrachochytrium dendrobatidis (strain JAM81 / FGSC 10211)</name>
    <name type="common">Frog chytrid fungus</name>
    <dbReference type="NCBI Taxonomy" id="684364"/>
    <lineage>
        <taxon>Eukaryota</taxon>
        <taxon>Fungi</taxon>
        <taxon>Fungi incertae sedis</taxon>
        <taxon>Chytridiomycota</taxon>
        <taxon>Chytridiomycota incertae sedis</taxon>
        <taxon>Chytridiomycetes</taxon>
        <taxon>Rhizophydiales</taxon>
        <taxon>Rhizophydiales incertae sedis</taxon>
        <taxon>Batrachochytrium</taxon>
    </lineage>
</organism>
<gene>
    <name type="ORF">BATDEDRAFT_23335</name>
</gene>
<proteinExistence type="inferred from homology"/>
<reference key="1">
    <citation type="submission" date="2009-12" db="EMBL/GenBank/DDBJ databases">
        <title>The draft genome of Batrachochytrium dendrobatidis.</title>
        <authorList>
            <consortium name="US DOE Joint Genome Institute (JGI-PGF)"/>
            <person name="Kuo A."/>
            <person name="Salamov A."/>
            <person name="Schmutz J."/>
            <person name="Lucas S."/>
            <person name="Pitluck S."/>
            <person name="Rosenblum E."/>
            <person name="Stajich J."/>
            <person name="Eisen M."/>
            <person name="Grigoriev I.V."/>
        </authorList>
    </citation>
    <scope>NUCLEOTIDE SEQUENCE [LARGE SCALE GENOMIC DNA]</scope>
    <source>
        <strain>JAM81 / FGSC 10211</strain>
    </source>
</reference>